<dbReference type="EMBL" id="AY660566">
    <property type="protein sequence ID" value="AAT80729.1"/>
    <property type="molecule type" value="Genomic_DNA"/>
</dbReference>
<dbReference type="RefSeq" id="YP_209533.1">
    <property type="nucleotide sequence ID" value="NC_006861.1"/>
</dbReference>
<dbReference type="SMR" id="Q5SCW5"/>
<dbReference type="GeneID" id="3283718"/>
<dbReference type="GO" id="GO:0009535">
    <property type="term" value="C:chloroplast thylakoid membrane"/>
    <property type="evidence" value="ECO:0007669"/>
    <property type="project" value="UniProtKB-SubCell"/>
</dbReference>
<dbReference type="GO" id="GO:0009523">
    <property type="term" value="C:photosystem II"/>
    <property type="evidence" value="ECO:0007669"/>
    <property type="project" value="UniProtKB-KW"/>
</dbReference>
<dbReference type="GO" id="GO:0016168">
    <property type="term" value="F:chlorophyll binding"/>
    <property type="evidence" value="ECO:0007669"/>
    <property type="project" value="UniProtKB-UniRule"/>
</dbReference>
<dbReference type="GO" id="GO:0045156">
    <property type="term" value="F:electron transporter, transferring electrons within the cyclic electron transport pathway of photosynthesis activity"/>
    <property type="evidence" value="ECO:0007669"/>
    <property type="project" value="InterPro"/>
</dbReference>
<dbReference type="GO" id="GO:0046872">
    <property type="term" value="F:metal ion binding"/>
    <property type="evidence" value="ECO:0007669"/>
    <property type="project" value="UniProtKB-KW"/>
</dbReference>
<dbReference type="GO" id="GO:0009772">
    <property type="term" value="P:photosynthetic electron transport in photosystem II"/>
    <property type="evidence" value="ECO:0007669"/>
    <property type="project" value="InterPro"/>
</dbReference>
<dbReference type="FunFam" id="1.10.10.670:FF:000001">
    <property type="entry name" value="Photosystem II CP43 reaction center protein"/>
    <property type="match status" value="1"/>
</dbReference>
<dbReference type="Gene3D" id="1.10.10.670">
    <property type="entry name" value="photosystem ii from thermosynechococcus elongatus"/>
    <property type="match status" value="1"/>
</dbReference>
<dbReference type="HAMAP" id="MF_01496">
    <property type="entry name" value="PSII_PsbC_CP43"/>
    <property type="match status" value="1"/>
</dbReference>
<dbReference type="InterPro" id="IPR000932">
    <property type="entry name" value="PS_antenna-like"/>
</dbReference>
<dbReference type="InterPro" id="IPR036001">
    <property type="entry name" value="PS_II_antenna-like_sf"/>
</dbReference>
<dbReference type="InterPro" id="IPR005869">
    <property type="entry name" value="PSII_PsbC"/>
</dbReference>
<dbReference type="InterPro" id="IPR044900">
    <property type="entry name" value="PSII_PsbC_sf"/>
</dbReference>
<dbReference type="NCBIfam" id="TIGR01153">
    <property type="entry name" value="psbC"/>
    <property type="match status" value="1"/>
</dbReference>
<dbReference type="Pfam" id="PF00421">
    <property type="entry name" value="PSII"/>
    <property type="match status" value="1"/>
</dbReference>
<dbReference type="SUPFAM" id="SSF161077">
    <property type="entry name" value="Photosystem II antenna protein-like"/>
    <property type="match status" value="1"/>
</dbReference>
<evidence type="ECO:0000255" key="1">
    <source>
        <dbReference type="HAMAP-Rule" id="MF_01496"/>
    </source>
</evidence>
<sequence length="473" mass="51619">MKILYSPRRFYPVETLFNGTLALGGRDQETTGFAWWAGNARLINLSGKLLGAHVAHGGLIVFWAGAMNLFEVAHFVPEKPMYEQGLILLPHLATLGWGVGPGGEVVDIFPYFVSGVLHLISSAVLGFGGIYHAIIGPETLEESFPFFGYAWKDKNKMTTILGIHLILLGAGAFLSVLKALYFGGVYDTWAPGGGDVRKITNLTLNPSVVFGYLLKSPFGGEGWIVSVDNLEDIIGGHVWLGSICIFGGIWHISTKPFAWARRAFVWSGEAYLSYSLGALSVFGFIACCFAWFNNTAYPSEFYGPTGPEASQAQAFTFLVRDQRLGANVGSAQGPTGLGKYLMRSPTGEIIFGGETMRFWDLRAPWLEPLRGPNGLDLSKLKKDIQPWQERRSAEYMTHAPLGSLNSVGGVATEINAVNYVSPRSWLATSHFVSGFFFFVGHLWHAGRARAAAAGFEKGIDRDFEPVLSTTPLN</sequence>
<feature type="propeptide" id="PRO_0000431152" evidence="1">
    <location>
        <begin position="1"/>
        <end position="14"/>
    </location>
</feature>
<feature type="chain" id="PRO_0000361396" description="Photosystem II CP43 reaction center protein" evidence="1">
    <location>
        <begin position="15"/>
        <end position="473"/>
    </location>
</feature>
<feature type="transmembrane region" description="Helical" evidence="1">
    <location>
        <begin position="69"/>
        <end position="93"/>
    </location>
</feature>
<feature type="transmembrane region" description="Helical" evidence="1">
    <location>
        <begin position="134"/>
        <end position="155"/>
    </location>
</feature>
<feature type="transmembrane region" description="Helical" evidence="1">
    <location>
        <begin position="178"/>
        <end position="200"/>
    </location>
</feature>
<feature type="transmembrane region" description="Helical" evidence="1">
    <location>
        <begin position="255"/>
        <end position="275"/>
    </location>
</feature>
<feature type="transmembrane region" description="Helical" evidence="1">
    <location>
        <begin position="291"/>
        <end position="312"/>
    </location>
</feature>
<feature type="transmembrane region" description="Helical" evidence="1">
    <location>
        <begin position="447"/>
        <end position="471"/>
    </location>
</feature>
<feature type="binding site" evidence="1">
    <location>
        <position position="367"/>
    </location>
    <ligand>
        <name>[CaMn4O5] cluster</name>
        <dbReference type="ChEBI" id="CHEBI:189552"/>
    </ligand>
</feature>
<feature type="modified residue" description="N-acetylthreonine" evidence="1">
    <location>
        <position position="15"/>
    </location>
</feature>
<feature type="modified residue" description="Phosphothreonine" evidence="1">
    <location>
        <position position="15"/>
    </location>
</feature>
<keyword id="KW-0007">Acetylation</keyword>
<keyword id="KW-0148">Chlorophyll</keyword>
<keyword id="KW-0150">Chloroplast</keyword>
<keyword id="KW-0157">Chromophore</keyword>
<keyword id="KW-0464">Manganese</keyword>
<keyword id="KW-0472">Membrane</keyword>
<keyword id="KW-0479">Metal-binding</keyword>
<keyword id="KW-0597">Phosphoprotein</keyword>
<keyword id="KW-0602">Photosynthesis</keyword>
<keyword id="KW-0604">Photosystem II</keyword>
<keyword id="KW-0934">Plastid</keyword>
<keyword id="KW-0793">Thylakoid</keyword>
<keyword id="KW-0812">Transmembrane</keyword>
<keyword id="KW-1133">Transmembrane helix</keyword>
<reference key="1">
    <citation type="journal article" date="2005" name="Gene">
        <title>The first complete chloroplast genome sequence of a lycophyte, Huperzia lucidula (Lycopodiaceae).</title>
        <authorList>
            <person name="Wolf P.G."/>
            <person name="Karol K.G."/>
            <person name="Mandoli D.F."/>
            <person name="Kuehl J.V."/>
            <person name="Arumuganathan K."/>
            <person name="Ellis M.W."/>
            <person name="Mishler B.D."/>
            <person name="Kelch D.G."/>
            <person name="Olmstead R.G."/>
            <person name="Boore J.L."/>
        </authorList>
    </citation>
    <scope>NUCLEOTIDE SEQUENCE [LARGE SCALE GENOMIC DNA]</scope>
</reference>
<gene>
    <name evidence="1" type="primary">psbC</name>
</gene>
<accession>Q5SCW5</accession>
<organism>
    <name type="scientific">Huperzia lucidula</name>
    <name type="common">Shining clubmoss</name>
    <name type="synonym">Lycopodium lucidulum</name>
    <dbReference type="NCBI Taxonomy" id="37429"/>
    <lineage>
        <taxon>Eukaryota</taxon>
        <taxon>Viridiplantae</taxon>
        <taxon>Streptophyta</taxon>
        <taxon>Embryophyta</taxon>
        <taxon>Tracheophyta</taxon>
        <taxon>Lycopodiopsida</taxon>
        <taxon>Lycopodiales</taxon>
        <taxon>Lycopodiaceae</taxon>
        <taxon>Huperzioideae</taxon>
        <taxon>Huperzia</taxon>
    </lineage>
</organism>
<geneLocation type="chloroplast"/>
<proteinExistence type="inferred from homology"/>
<name>PSBC_HUPLU</name>
<comment type="function">
    <text evidence="1">One of the components of the core complex of photosystem II (PSII). It binds chlorophyll and helps catalyze the primary light-induced photochemical processes of PSII. PSII is a light-driven water:plastoquinone oxidoreductase, using light energy to abstract electrons from H(2)O, generating O(2) and a proton gradient subsequently used for ATP formation.</text>
</comment>
<comment type="cofactor">
    <text evidence="1">Binds multiple chlorophylls and provides some of the ligands for the Ca-4Mn-5O cluster of the oxygen-evolving complex. It may also provide a ligand for a Cl- that is required for oxygen evolution. PSII binds additional chlorophylls, carotenoids and specific lipids.</text>
</comment>
<comment type="subunit">
    <text evidence="1">PSII is composed of 1 copy each of membrane proteins PsbA, PsbB, PsbC, PsbD, PsbE, PsbF, PsbH, PsbI, PsbJ, PsbK, PsbL, PsbM, PsbT, PsbX, PsbY, PsbZ, Psb30/Ycf12, at least 3 peripheral proteins of the oxygen-evolving complex and a large number of cofactors. It forms dimeric complexes.</text>
</comment>
<comment type="subcellular location">
    <subcellularLocation>
        <location evidence="1">Plastid</location>
        <location evidence="1">Chloroplast thylakoid membrane</location>
        <topology evidence="1">Multi-pass membrane protein</topology>
    </subcellularLocation>
</comment>
<comment type="similarity">
    <text evidence="1">Belongs to the PsbB/PsbC family. PsbC subfamily.</text>
</comment>
<protein>
    <recommendedName>
        <fullName evidence="1">Photosystem II CP43 reaction center protein</fullName>
    </recommendedName>
    <alternativeName>
        <fullName evidence="1">PSII 43 kDa protein</fullName>
    </alternativeName>
    <alternativeName>
        <fullName evidence="1">Protein CP-43</fullName>
    </alternativeName>
</protein>